<evidence type="ECO:0000250" key="1">
    <source>
        <dbReference type="UniProtKB" id="Q9HD33"/>
    </source>
</evidence>
<evidence type="ECO:0000255" key="2"/>
<evidence type="ECO:0000256" key="3">
    <source>
        <dbReference type="SAM" id="MobiDB-lite"/>
    </source>
</evidence>
<evidence type="ECO:0000305" key="4"/>
<protein>
    <recommendedName>
        <fullName evidence="4">Large ribosomal subunit protein uL29m</fullName>
    </recommendedName>
    <alternativeName>
        <fullName>39S ribosomal protein L47, mitochondrial</fullName>
        <shortName>L47mt</shortName>
        <shortName>MRP-L47</shortName>
    </alternativeName>
</protein>
<dbReference type="EMBL" id="BC029173">
    <property type="protein sequence ID" value="AAH29173.1"/>
    <property type="molecule type" value="mRNA"/>
</dbReference>
<dbReference type="EMBL" id="BC038065">
    <property type="protein sequence ID" value="AAH38065.1"/>
    <property type="status" value="ALT_INIT"/>
    <property type="molecule type" value="mRNA"/>
</dbReference>
<dbReference type="EMBL" id="BC087953">
    <property type="protein sequence ID" value="AAH87953.1"/>
    <property type="molecule type" value="mRNA"/>
</dbReference>
<dbReference type="CCDS" id="CCDS17299.1"/>
<dbReference type="RefSeq" id="NP_083293.1">
    <property type="nucleotide sequence ID" value="NM_029017.2"/>
</dbReference>
<dbReference type="SMR" id="Q8K2Y7"/>
<dbReference type="BioGRID" id="216873">
    <property type="interactions" value="9"/>
</dbReference>
<dbReference type="ComplexPortal" id="CPX-5302">
    <property type="entry name" value="39S mitochondrial large ribosomal subunit"/>
</dbReference>
<dbReference type="FunCoup" id="Q8K2Y7">
    <property type="interactions" value="1408"/>
</dbReference>
<dbReference type="STRING" id="10090.ENSMUSP00000048078"/>
<dbReference type="iPTMnet" id="Q8K2Y7"/>
<dbReference type="PhosphoSitePlus" id="Q8K2Y7"/>
<dbReference type="PaxDb" id="10090-ENSMUSP00000048078"/>
<dbReference type="PeptideAtlas" id="Q8K2Y7"/>
<dbReference type="ProteomicsDB" id="301605"/>
<dbReference type="Pumba" id="Q8K2Y7"/>
<dbReference type="Antibodypedia" id="50126">
    <property type="antibodies" value="72 antibodies from 22 providers"/>
</dbReference>
<dbReference type="DNASU" id="74600"/>
<dbReference type="Ensembl" id="ENSMUST00000043966.8">
    <property type="protein sequence ID" value="ENSMUSP00000048078.8"/>
    <property type="gene ID" value="ENSMUSG00000037531.9"/>
</dbReference>
<dbReference type="GeneID" id="74600"/>
<dbReference type="KEGG" id="mmu:74600"/>
<dbReference type="UCSC" id="uc008owp.2">
    <property type="organism name" value="mouse"/>
</dbReference>
<dbReference type="AGR" id="MGI:1921850"/>
<dbReference type="CTD" id="57129"/>
<dbReference type="MGI" id="MGI:1921850">
    <property type="gene designation" value="Mrpl47"/>
</dbReference>
<dbReference type="VEuPathDB" id="HostDB:ENSMUSG00000037531"/>
<dbReference type="eggNOG" id="KOG3331">
    <property type="taxonomic scope" value="Eukaryota"/>
</dbReference>
<dbReference type="GeneTree" id="ENSGT00390000002837"/>
<dbReference type="HOGENOM" id="CLU_087736_1_0_1"/>
<dbReference type="InParanoid" id="Q8K2Y7"/>
<dbReference type="OMA" id="LTMEHEC"/>
<dbReference type="OrthoDB" id="270763at2759"/>
<dbReference type="PhylomeDB" id="Q8K2Y7"/>
<dbReference type="TreeFam" id="TF314327"/>
<dbReference type="Reactome" id="R-MMU-5389840">
    <property type="pathway name" value="Mitochondrial translation elongation"/>
</dbReference>
<dbReference type="Reactome" id="R-MMU-5419276">
    <property type="pathway name" value="Mitochondrial translation termination"/>
</dbReference>
<dbReference type="BioGRID-ORCS" id="74600">
    <property type="hits" value="26 hits in 76 CRISPR screens"/>
</dbReference>
<dbReference type="ChiTaRS" id="Mrpl47">
    <property type="organism name" value="mouse"/>
</dbReference>
<dbReference type="PRO" id="PR:Q8K2Y7"/>
<dbReference type="Proteomes" id="UP000000589">
    <property type="component" value="Chromosome 3"/>
</dbReference>
<dbReference type="RNAct" id="Q8K2Y7">
    <property type="molecule type" value="protein"/>
</dbReference>
<dbReference type="Bgee" id="ENSMUSG00000037531">
    <property type="expression patterns" value="Expressed in dorsal pancreas and 245 other cell types or tissues"/>
</dbReference>
<dbReference type="GO" id="GO:0005743">
    <property type="term" value="C:mitochondrial inner membrane"/>
    <property type="evidence" value="ECO:0000303"/>
    <property type="project" value="ComplexPortal"/>
</dbReference>
<dbReference type="GO" id="GO:0005762">
    <property type="term" value="C:mitochondrial large ribosomal subunit"/>
    <property type="evidence" value="ECO:0000250"/>
    <property type="project" value="UniProtKB"/>
</dbReference>
<dbReference type="GO" id="GO:0005739">
    <property type="term" value="C:mitochondrion"/>
    <property type="evidence" value="ECO:0007005"/>
    <property type="project" value="MGI"/>
</dbReference>
<dbReference type="GO" id="GO:0003735">
    <property type="term" value="F:structural constituent of ribosome"/>
    <property type="evidence" value="ECO:0007669"/>
    <property type="project" value="InterPro"/>
</dbReference>
<dbReference type="GO" id="GO:0032543">
    <property type="term" value="P:mitochondrial translation"/>
    <property type="evidence" value="ECO:0000303"/>
    <property type="project" value="ComplexPortal"/>
</dbReference>
<dbReference type="Gene3D" id="6.10.330.20">
    <property type="match status" value="1"/>
</dbReference>
<dbReference type="InterPro" id="IPR038340">
    <property type="entry name" value="MRP-L47_sf"/>
</dbReference>
<dbReference type="InterPro" id="IPR010729">
    <property type="entry name" value="Ribosomal_uL29_mit"/>
</dbReference>
<dbReference type="PANTHER" id="PTHR21183:SF18">
    <property type="entry name" value="LARGE RIBOSOMAL SUBUNIT PROTEIN UL29M"/>
    <property type="match status" value="1"/>
</dbReference>
<dbReference type="PANTHER" id="PTHR21183">
    <property type="entry name" value="RIBOSOMAL PROTEIN L47, MITOCHONDRIAL-RELATED"/>
    <property type="match status" value="1"/>
</dbReference>
<dbReference type="Pfam" id="PF06984">
    <property type="entry name" value="MRP-L47"/>
    <property type="match status" value="1"/>
</dbReference>
<gene>
    <name type="primary">Mrpl47</name>
</gene>
<reference key="1">
    <citation type="journal article" date="2004" name="Genome Res.">
        <title>The status, quality, and expansion of the NIH full-length cDNA project: the Mammalian Gene Collection (MGC).</title>
        <authorList>
            <consortium name="The MGC Project Team"/>
        </authorList>
    </citation>
    <scope>NUCLEOTIDE SEQUENCE [LARGE SCALE MRNA]</scope>
    <source>
        <strain>FVB/N</strain>
        <tissue>Kidney</tissue>
    </source>
</reference>
<reference key="2">
    <citation type="journal article" date="2010" name="Cell">
        <title>A tissue-specific atlas of mouse protein phosphorylation and expression.</title>
        <authorList>
            <person name="Huttlin E.L."/>
            <person name="Jedrychowski M.P."/>
            <person name="Elias J.E."/>
            <person name="Goswami T."/>
            <person name="Rad R."/>
            <person name="Beausoleil S.A."/>
            <person name="Villen J."/>
            <person name="Haas W."/>
            <person name="Sowa M.E."/>
            <person name="Gygi S.P."/>
        </authorList>
    </citation>
    <scope>IDENTIFICATION BY MASS SPECTROMETRY [LARGE SCALE ANALYSIS]</scope>
    <source>
        <tissue>Brain</tissue>
        <tissue>Heart</tissue>
        <tissue>Kidney</tissue>
        <tissue>Liver</tissue>
        <tissue>Pancreas</tissue>
        <tissue>Spleen</tissue>
    </source>
</reference>
<accession>Q8K2Y7</accession>
<accession>Q5I0U2</accession>
<accession>Q8CHZ6</accession>
<organism>
    <name type="scientific">Mus musculus</name>
    <name type="common">Mouse</name>
    <dbReference type="NCBI Taxonomy" id="10090"/>
    <lineage>
        <taxon>Eukaryota</taxon>
        <taxon>Metazoa</taxon>
        <taxon>Chordata</taxon>
        <taxon>Craniata</taxon>
        <taxon>Vertebrata</taxon>
        <taxon>Euteleostomi</taxon>
        <taxon>Mammalia</taxon>
        <taxon>Eutheria</taxon>
        <taxon>Euarchontoglires</taxon>
        <taxon>Glires</taxon>
        <taxon>Rodentia</taxon>
        <taxon>Myomorpha</taxon>
        <taxon>Muroidea</taxon>
        <taxon>Muridae</taxon>
        <taxon>Murinae</taxon>
        <taxon>Mus</taxon>
        <taxon>Mus</taxon>
    </lineage>
</organism>
<sequence length="252" mass="29726">MAATSLVGICRRASAFLKAACSLVNPKDAAHSGCRSSLSLLHKNTPHVTSFLQCKLLHTTLSRKGLEEFFDDPKNWGEEKVKSGASWTCQQLRNKSNEDLHKLWYVLLKERNMLLTLEQEAKRQRLPMPSPERLEKVVDSMDNVDKVVQEREDALRLLQTGQEKPRPGAWRRDIFGRIVWHKFKQWPIPWYLNKRYNRRRFFAMPYVDRFIRLRIEKHARIEARKRSLQKKKEKILHAKFPHLSQERKSSSV</sequence>
<proteinExistence type="evidence at protein level"/>
<feature type="transit peptide" description="Mitochondrion" evidence="2">
    <location>
        <begin position="1"/>
        <end status="unknown"/>
    </location>
</feature>
<feature type="chain" id="PRO_0000030568" description="Large ribosomal subunit protein uL29m">
    <location>
        <begin status="unknown"/>
        <end position="252"/>
    </location>
</feature>
<feature type="region of interest" description="Disordered" evidence="3">
    <location>
        <begin position="230"/>
        <end position="252"/>
    </location>
</feature>
<feature type="compositionally biased region" description="Basic residues" evidence="3">
    <location>
        <begin position="230"/>
        <end position="240"/>
    </location>
</feature>
<feature type="modified residue" description="N6-acetyllysine" evidence="1">
    <location>
        <position position="146"/>
    </location>
</feature>
<feature type="sequence conflict" description="In Ref. 1; AAH87953." evidence="4" ref="1">
    <original>V</original>
    <variation>A</variation>
    <location>
        <position position="106"/>
    </location>
</feature>
<keyword id="KW-0007">Acetylation</keyword>
<keyword id="KW-0496">Mitochondrion</keyword>
<keyword id="KW-1185">Reference proteome</keyword>
<keyword id="KW-0687">Ribonucleoprotein</keyword>
<keyword id="KW-0689">Ribosomal protein</keyword>
<keyword id="KW-0809">Transit peptide</keyword>
<comment type="subunit">
    <text evidence="1">Component of the mitochondrial ribosome large subunit (39S) which comprises a 16S rRNA and about 50 distinct proteins.</text>
</comment>
<comment type="subcellular location">
    <subcellularLocation>
        <location evidence="1">Mitochondrion</location>
    </subcellularLocation>
</comment>
<comment type="similarity">
    <text evidence="4">Belongs to the universal ribosomal protein uL29 family.</text>
</comment>
<comment type="sequence caution" evidence="4">
    <conflict type="erroneous initiation">
        <sequence resource="EMBL-CDS" id="AAH38065"/>
    </conflict>
</comment>
<name>RM47_MOUSE</name>